<accession>P57425</accession>
<reference key="1">
    <citation type="journal article" date="2000" name="Nature">
        <title>Genome sequence of the endocellular bacterial symbiont of aphids Buchnera sp. APS.</title>
        <authorList>
            <person name="Shigenobu S."/>
            <person name="Watanabe H."/>
            <person name="Hattori M."/>
            <person name="Sakaki Y."/>
            <person name="Ishikawa H."/>
        </authorList>
    </citation>
    <scope>NUCLEOTIDE SEQUENCE [LARGE SCALE GENOMIC DNA]</scope>
    <source>
        <strain>APS</strain>
    </source>
</reference>
<dbReference type="EMBL" id="BA000003">
    <property type="protein sequence ID" value="BAB13048.1"/>
    <property type="molecule type" value="Genomic_DNA"/>
</dbReference>
<dbReference type="RefSeq" id="NP_240162.1">
    <property type="nucleotide sequence ID" value="NC_002528.1"/>
</dbReference>
<dbReference type="RefSeq" id="WP_009874298.1">
    <property type="nucleotide sequence ID" value="NZ_AP036055.1"/>
</dbReference>
<dbReference type="SMR" id="P57425"/>
<dbReference type="STRING" id="563178.BUAP5A_337"/>
<dbReference type="EnsemblBacteria" id="BAB13048">
    <property type="protein sequence ID" value="BAB13048"/>
    <property type="gene ID" value="BAB13048"/>
</dbReference>
<dbReference type="KEGG" id="buc:BU343"/>
<dbReference type="PATRIC" id="fig|107806.10.peg.355"/>
<dbReference type="eggNOG" id="COG2063">
    <property type="taxonomic scope" value="Bacteria"/>
</dbReference>
<dbReference type="HOGENOM" id="CLU_069313_0_0_6"/>
<dbReference type="Proteomes" id="UP000001806">
    <property type="component" value="Chromosome"/>
</dbReference>
<dbReference type="GO" id="GO:0009427">
    <property type="term" value="C:bacterial-type flagellum basal body, distal rod, L ring"/>
    <property type="evidence" value="ECO:0007669"/>
    <property type="project" value="InterPro"/>
</dbReference>
<dbReference type="GO" id="GO:0009279">
    <property type="term" value="C:cell outer membrane"/>
    <property type="evidence" value="ECO:0007669"/>
    <property type="project" value="UniProtKB-SubCell"/>
</dbReference>
<dbReference type="GO" id="GO:0003774">
    <property type="term" value="F:cytoskeletal motor activity"/>
    <property type="evidence" value="ECO:0007669"/>
    <property type="project" value="InterPro"/>
</dbReference>
<dbReference type="GO" id="GO:0071973">
    <property type="term" value="P:bacterial-type flagellum-dependent cell motility"/>
    <property type="evidence" value="ECO:0007669"/>
    <property type="project" value="InterPro"/>
</dbReference>
<dbReference type="HAMAP" id="MF_00415">
    <property type="entry name" value="FlgH"/>
    <property type="match status" value="1"/>
</dbReference>
<dbReference type="InterPro" id="IPR000527">
    <property type="entry name" value="Flag_Lring"/>
</dbReference>
<dbReference type="PANTHER" id="PTHR34933">
    <property type="entry name" value="FLAGELLAR L-RING PROTEIN"/>
    <property type="match status" value="1"/>
</dbReference>
<dbReference type="PANTHER" id="PTHR34933:SF3">
    <property type="entry name" value="FLAGELLAR L-RING PROTEIN"/>
    <property type="match status" value="1"/>
</dbReference>
<dbReference type="Pfam" id="PF02107">
    <property type="entry name" value="FlgH"/>
    <property type="match status" value="1"/>
</dbReference>
<dbReference type="PRINTS" id="PR01008">
    <property type="entry name" value="FLGLRINGFLGH"/>
</dbReference>
<dbReference type="PROSITE" id="PS51257">
    <property type="entry name" value="PROKAR_LIPOPROTEIN"/>
    <property type="match status" value="1"/>
</dbReference>
<protein>
    <recommendedName>
        <fullName>Flagellar L-ring protein</fullName>
    </recommendedName>
    <alternativeName>
        <fullName>Basal body L-ring protein</fullName>
    </alternativeName>
</protein>
<keyword id="KW-0975">Bacterial flagellum</keyword>
<keyword id="KW-0998">Cell outer membrane</keyword>
<keyword id="KW-0449">Lipoprotein</keyword>
<keyword id="KW-0472">Membrane</keyword>
<keyword id="KW-0564">Palmitate</keyword>
<keyword id="KW-1185">Reference proteome</keyword>
<keyword id="KW-0732">Signal</keyword>
<comment type="function">
    <text evidence="1">Assembles around the rod to form the L-ring and probably protects the motor/basal body from shearing forces during rotation.</text>
</comment>
<comment type="subunit">
    <text evidence="1">The basal body constitutes a major portion of the flagellar organelle and consists of four rings (L,P,S, and M) mounted on a central rod.</text>
</comment>
<comment type="subcellular location">
    <subcellularLocation>
        <location evidence="1">Cell outer membrane</location>
        <topology evidence="1">Lipid-anchor</topology>
    </subcellularLocation>
    <subcellularLocation>
        <location evidence="1">Bacterial flagellum basal body</location>
    </subcellularLocation>
</comment>
<comment type="similarity">
    <text evidence="3">Belongs to the FlgH family.</text>
</comment>
<evidence type="ECO:0000250" key="1"/>
<evidence type="ECO:0000255" key="2"/>
<evidence type="ECO:0000305" key="3"/>
<organism>
    <name type="scientific">Buchnera aphidicola subsp. Acyrthosiphon pisum (strain APS)</name>
    <name type="common">Acyrthosiphon pisum symbiotic bacterium</name>
    <dbReference type="NCBI Taxonomy" id="107806"/>
    <lineage>
        <taxon>Bacteria</taxon>
        <taxon>Pseudomonadati</taxon>
        <taxon>Pseudomonadota</taxon>
        <taxon>Gammaproteobacteria</taxon>
        <taxon>Enterobacterales</taxon>
        <taxon>Erwiniaceae</taxon>
        <taxon>Buchnera</taxon>
    </lineage>
</organism>
<gene>
    <name type="primary">flgH</name>
    <name type="ordered locus">BU343</name>
</gene>
<name>FLGH_BUCAI</name>
<sequence length="238" mass="26125">MIKLFICQKKYYLTAIFLLTIQSCASVEYKPLVTGATTAIAPNIWPKVVNGSLFQEKIPINYGYQPLFEDHRPHNIGDTITVVLQENISASNSSISNMSRDGSANFGLKIAPGQLNNILGVNFQDNTTSLDSFGRNNFSGKGSNSANNKFTGLITVTVKRVLPNGNLKVIGEKQVSINKGTEFIRFSGVINPTNINKNNFISSTQIADARIEYLSHGGLDDVQKMGWLQKLLLKISPI</sequence>
<proteinExistence type="inferred from homology"/>
<feature type="signal peptide" evidence="2">
    <location>
        <begin position="1"/>
        <end position="23"/>
    </location>
</feature>
<feature type="chain" id="PRO_0000009431" description="Flagellar L-ring protein">
    <location>
        <begin position="24"/>
        <end position="238"/>
    </location>
</feature>
<feature type="lipid moiety-binding region" description="N-palmitoyl cysteine" evidence="2">
    <location>
        <position position="24"/>
    </location>
</feature>
<feature type="lipid moiety-binding region" description="S-diacylglycerol cysteine" evidence="2">
    <location>
        <position position="24"/>
    </location>
</feature>